<keyword id="KW-0067">ATP-binding</keyword>
<keyword id="KW-0963">Cytoplasm</keyword>
<keyword id="KW-0324">Glycolysis</keyword>
<keyword id="KW-0418">Kinase</keyword>
<keyword id="KW-0547">Nucleotide-binding</keyword>
<keyword id="KW-1185">Reference proteome</keyword>
<keyword id="KW-0808">Transferase</keyword>
<reference key="1">
    <citation type="journal article" date="2001" name="Proc. Natl. Acad. Sci. U.S.A.">
        <title>Complete genome sequence of Caulobacter crescentus.</title>
        <authorList>
            <person name="Nierman W.C."/>
            <person name="Feldblyum T.V."/>
            <person name="Laub M.T."/>
            <person name="Paulsen I.T."/>
            <person name="Nelson K.E."/>
            <person name="Eisen J.A."/>
            <person name="Heidelberg J.F."/>
            <person name="Alley M.R.K."/>
            <person name="Ohta N."/>
            <person name="Maddock J.R."/>
            <person name="Potocka I."/>
            <person name="Nelson W.C."/>
            <person name="Newton A."/>
            <person name="Stephens C."/>
            <person name="Phadke N.D."/>
            <person name="Ely B."/>
            <person name="DeBoy R.T."/>
            <person name="Dodson R.J."/>
            <person name="Durkin A.S."/>
            <person name="Gwinn M.L."/>
            <person name="Haft D.H."/>
            <person name="Kolonay J.F."/>
            <person name="Smit J."/>
            <person name="Craven M.B."/>
            <person name="Khouri H.M."/>
            <person name="Shetty J."/>
            <person name="Berry K.J."/>
            <person name="Utterback T.R."/>
            <person name="Tran K."/>
            <person name="Wolf A.M."/>
            <person name="Vamathevan J.J."/>
            <person name="Ermolaeva M.D."/>
            <person name="White O."/>
            <person name="Salzberg S.L."/>
            <person name="Venter J.C."/>
            <person name="Shapiro L."/>
            <person name="Fraser C.M."/>
        </authorList>
    </citation>
    <scope>NUCLEOTIDE SEQUENCE [LARGE SCALE GENOMIC DNA]</scope>
    <source>
        <strain>ATCC 19089 / CIP 103742 / CB 15</strain>
    </source>
</reference>
<evidence type="ECO:0000255" key="1">
    <source>
        <dbReference type="HAMAP-Rule" id="MF_00145"/>
    </source>
</evidence>
<protein>
    <recommendedName>
        <fullName evidence="1">Phosphoglycerate kinase</fullName>
        <ecNumber evidence="1">2.7.2.3</ecNumber>
    </recommendedName>
</protein>
<sequence>MTFRTLDTADLAGKRALVRVDFNVPVDGGKVADDTRLKAALPTIRFLADKGAKVVLLAHFDRPKGKVVPEMSLAFVAEPLAALLGAPVAFVGDCVGPAAAEVVNGLADGGVALLENVRFHAGEEKNDAEFAKALAANGDVYVNDAFSAAHRAHASTEGLAKLLPAYPGVSMQRELEALDAALGNPKKPVIGIVGGSKVSTKLDLLNNLVAKLDRLAIGGGMANTFLFAQGHDVGGSLCEKDLADTAREIMEKAKAAGCELLLPVDVVVAKKVAPGVETAVRSLSEVQADDLILDAGPESAKRLLAAMDQSLTLIWNGPLGVFEVPPFDEATVSAAKHAASLAKSGKIVAVAGGGDTVAALNHAGVSADFTFVSTAGGAFLEWMEGKTLPGVAALES</sequence>
<gene>
    <name evidence="1" type="primary">pgk</name>
    <name type="ordered locus">CC_3249</name>
</gene>
<dbReference type="EC" id="2.7.2.3" evidence="1"/>
<dbReference type="EMBL" id="AE005673">
    <property type="protein sequence ID" value="AAK25211.1"/>
    <property type="molecule type" value="Genomic_DNA"/>
</dbReference>
<dbReference type="PIR" id="G87651">
    <property type="entry name" value="G87651"/>
</dbReference>
<dbReference type="RefSeq" id="NP_422043.1">
    <property type="nucleotide sequence ID" value="NC_002696.2"/>
</dbReference>
<dbReference type="RefSeq" id="WP_010921082.1">
    <property type="nucleotide sequence ID" value="NC_002696.2"/>
</dbReference>
<dbReference type="SMR" id="Q9A3F5"/>
<dbReference type="STRING" id="190650.CC_3249"/>
<dbReference type="EnsemblBacteria" id="AAK25211">
    <property type="protein sequence ID" value="AAK25211"/>
    <property type="gene ID" value="CC_3249"/>
</dbReference>
<dbReference type="KEGG" id="ccr:CC_3249"/>
<dbReference type="PATRIC" id="fig|190650.5.peg.3255"/>
<dbReference type="eggNOG" id="COG0126">
    <property type="taxonomic scope" value="Bacteria"/>
</dbReference>
<dbReference type="HOGENOM" id="CLU_025427_0_2_5"/>
<dbReference type="BioCyc" id="CAULO:CC3249-MONOMER"/>
<dbReference type="UniPathway" id="UPA00109">
    <property type="reaction ID" value="UER00185"/>
</dbReference>
<dbReference type="Proteomes" id="UP000001816">
    <property type="component" value="Chromosome"/>
</dbReference>
<dbReference type="GO" id="GO:0005829">
    <property type="term" value="C:cytosol"/>
    <property type="evidence" value="ECO:0007669"/>
    <property type="project" value="TreeGrafter"/>
</dbReference>
<dbReference type="GO" id="GO:0043531">
    <property type="term" value="F:ADP binding"/>
    <property type="evidence" value="ECO:0007669"/>
    <property type="project" value="TreeGrafter"/>
</dbReference>
<dbReference type="GO" id="GO:0005524">
    <property type="term" value="F:ATP binding"/>
    <property type="evidence" value="ECO:0007669"/>
    <property type="project" value="UniProtKB-KW"/>
</dbReference>
<dbReference type="GO" id="GO:0004618">
    <property type="term" value="F:phosphoglycerate kinase activity"/>
    <property type="evidence" value="ECO:0007669"/>
    <property type="project" value="UniProtKB-UniRule"/>
</dbReference>
<dbReference type="GO" id="GO:0006094">
    <property type="term" value="P:gluconeogenesis"/>
    <property type="evidence" value="ECO:0007669"/>
    <property type="project" value="TreeGrafter"/>
</dbReference>
<dbReference type="GO" id="GO:0006096">
    <property type="term" value="P:glycolytic process"/>
    <property type="evidence" value="ECO:0007669"/>
    <property type="project" value="UniProtKB-UniRule"/>
</dbReference>
<dbReference type="FunFam" id="3.40.50.1260:FF:000006">
    <property type="entry name" value="Phosphoglycerate kinase"/>
    <property type="match status" value="1"/>
</dbReference>
<dbReference type="FunFam" id="3.40.50.1260:FF:000031">
    <property type="entry name" value="Phosphoglycerate kinase 1"/>
    <property type="match status" value="1"/>
</dbReference>
<dbReference type="Gene3D" id="3.40.50.1260">
    <property type="entry name" value="Phosphoglycerate kinase, N-terminal domain"/>
    <property type="match status" value="2"/>
</dbReference>
<dbReference type="HAMAP" id="MF_00145">
    <property type="entry name" value="Phosphoglyc_kinase"/>
    <property type="match status" value="1"/>
</dbReference>
<dbReference type="InterPro" id="IPR001576">
    <property type="entry name" value="Phosphoglycerate_kinase"/>
</dbReference>
<dbReference type="InterPro" id="IPR015824">
    <property type="entry name" value="Phosphoglycerate_kinase_N"/>
</dbReference>
<dbReference type="InterPro" id="IPR036043">
    <property type="entry name" value="Phosphoglycerate_kinase_sf"/>
</dbReference>
<dbReference type="PANTHER" id="PTHR11406">
    <property type="entry name" value="PHOSPHOGLYCERATE KINASE"/>
    <property type="match status" value="1"/>
</dbReference>
<dbReference type="PANTHER" id="PTHR11406:SF23">
    <property type="entry name" value="PHOSPHOGLYCERATE KINASE 1, CHLOROPLASTIC-RELATED"/>
    <property type="match status" value="1"/>
</dbReference>
<dbReference type="Pfam" id="PF00162">
    <property type="entry name" value="PGK"/>
    <property type="match status" value="1"/>
</dbReference>
<dbReference type="PIRSF" id="PIRSF000724">
    <property type="entry name" value="Pgk"/>
    <property type="match status" value="1"/>
</dbReference>
<dbReference type="PRINTS" id="PR00477">
    <property type="entry name" value="PHGLYCKINASE"/>
</dbReference>
<dbReference type="SUPFAM" id="SSF53748">
    <property type="entry name" value="Phosphoglycerate kinase"/>
    <property type="match status" value="1"/>
</dbReference>
<name>PGK_CAUVC</name>
<proteinExistence type="inferred from homology"/>
<feature type="chain" id="PRO_0000145924" description="Phosphoglycerate kinase">
    <location>
        <begin position="1"/>
        <end position="396"/>
    </location>
</feature>
<feature type="binding site" evidence="1">
    <location>
        <begin position="21"/>
        <end position="23"/>
    </location>
    <ligand>
        <name>substrate</name>
    </ligand>
</feature>
<feature type="binding site" evidence="1">
    <location>
        <position position="36"/>
    </location>
    <ligand>
        <name>substrate</name>
    </ligand>
</feature>
<feature type="binding site" evidence="1">
    <location>
        <begin position="59"/>
        <end position="62"/>
    </location>
    <ligand>
        <name>substrate</name>
    </ligand>
</feature>
<feature type="binding site" evidence="1">
    <location>
        <position position="118"/>
    </location>
    <ligand>
        <name>substrate</name>
    </ligand>
</feature>
<feature type="binding site" evidence="1">
    <location>
        <position position="151"/>
    </location>
    <ligand>
        <name>substrate</name>
    </ligand>
</feature>
<feature type="binding site" evidence="1">
    <location>
        <position position="201"/>
    </location>
    <ligand>
        <name>ATP</name>
        <dbReference type="ChEBI" id="CHEBI:30616"/>
    </ligand>
</feature>
<feature type="binding site" evidence="1">
    <location>
        <position position="323"/>
    </location>
    <ligand>
        <name>ATP</name>
        <dbReference type="ChEBI" id="CHEBI:30616"/>
    </ligand>
</feature>
<feature type="binding site" evidence="1">
    <location>
        <begin position="353"/>
        <end position="356"/>
    </location>
    <ligand>
        <name>ATP</name>
        <dbReference type="ChEBI" id="CHEBI:30616"/>
    </ligand>
</feature>
<accession>Q9A3F5</accession>
<organism>
    <name type="scientific">Caulobacter vibrioides (strain ATCC 19089 / CIP 103742 / CB 15)</name>
    <name type="common">Caulobacter crescentus</name>
    <dbReference type="NCBI Taxonomy" id="190650"/>
    <lineage>
        <taxon>Bacteria</taxon>
        <taxon>Pseudomonadati</taxon>
        <taxon>Pseudomonadota</taxon>
        <taxon>Alphaproteobacteria</taxon>
        <taxon>Caulobacterales</taxon>
        <taxon>Caulobacteraceae</taxon>
        <taxon>Caulobacter</taxon>
    </lineage>
</organism>
<comment type="catalytic activity">
    <reaction evidence="1">
        <text>(2R)-3-phosphoglycerate + ATP = (2R)-3-phospho-glyceroyl phosphate + ADP</text>
        <dbReference type="Rhea" id="RHEA:14801"/>
        <dbReference type="ChEBI" id="CHEBI:30616"/>
        <dbReference type="ChEBI" id="CHEBI:57604"/>
        <dbReference type="ChEBI" id="CHEBI:58272"/>
        <dbReference type="ChEBI" id="CHEBI:456216"/>
        <dbReference type="EC" id="2.7.2.3"/>
    </reaction>
</comment>
<comment type="pathway">
    <text evidence="1">Carbohydrate degradation; glycolysis; pyruvate from D-glyceraldehyde 3-phosphate: step 2/5.</text>
</comment>
<comment type="subunit">
    <text evidence="1">Monomer.</text>
</comment>
<comment type="subcellular location">
    <subcellularLocation>
        <location evidence="1">Cytoplasm</location>
    </subcellularLocation>
</comment>
<comment type="similarity">
    <text evidence="1">Belongs to the phosphoglycerate kinase family.</text>
</comment>